<proteinExistence type="inferred from homology"/>
<sequence length="85" mass="9801">MVLLLSMISRCLILIILCYQRYISVFLSPRCRFYPTCSHYAVDALYTFGLLKGLLLIAKRILKCHPFHSGGLNSISIKTKSKREY</sequence>
<gene>
    <name type="ordered locus">bbp_015</name>
</gene>
<evidence type="ECO:0000255" key="1">
    <source>
        <dbReference type="HAMAP-Rule" id="MF_00386"/>
    </source>
</evidence>
<dbReference type="EMBL" id="AE016826">
    <property type="protein sequence ID" value="AAO26759.1"/>
    <property type="molecule type" value="Genomic_DNA"/>
</dbReference>
<dbReference type="RefSeq" id="WP_011091160.1">
    <property type="nucleotide sequence ID" value="NC_004545.1"/>
</dbReference>
<dbReference type="STRING" id="224915.bbp_015"/>
<dbReference type="KEGG" id="bab:bbp_015"/>
<dbReference type="eggNOG" id="COG0759">
    <property type="taxonomic scope" value="Bacteria"/>
</dbReference>
<dbReference type="HOGENOM" id="CLU_144811_6_0_6"/>
<dbReference type="OrthoDB" id="9801753at2"/>
<dbReference type="Proteomes" id="UP000000601">
    <property type="component" value="Chromosome"/>
</dbReference>
<dbReference type="GO" id="GO:0005886">
    <property type="term" value="C:plasma membrane"/>
    <property type="evidence" value="ECO:0007669"/>
    <property type="project" value="UniProtKB-SubCell"/>
</dbReference>
<dbReference type="HAMAP" id="MF_00386">
    <property type="entry name" value="UPF0161_YidD"/>
    <property type="match status" value="1"/>
</dbReference>
<dbReference type="InterPro" id="IPR002696">
    <property type="entry name" value="Membr_insert_effic_factor_YidD"/>
</dbReference>
<dbReference type="NCBIfam" id="TIGR00278">
    <property type="entry name" value="membrane protein insertion efficiency factor YidD"/>
    <property type="match status" value="1"/>
</dbReference>
<dbReference type="PANTHER" id="PTHR33383">
    <property type="entry name" value="MEMBRANE PROTEIN INSERTION EFFICIENCY FACTOR-RELATED"/>
    <property type="match status" value="1"/>
</dbReference>
<dbReference type="PANTHER" id="PTHR33383:SF1">
    <property type="entry name" value="MEMBRANE PROTEIN INSERTION EFFICIENCY FACTOR-RELATED"/>
    <property type="match status" value="1"/>
</dbReference>
<dbReference type="Pfam" id="PF01809">
    <property type="entry name" value="YidD"/>
    <property type="match status" value="1"/>
</dbReference>
<dbReference type="SMART" id="SM01234">
    <property type="entry name" value="Haemolytic"/>
    <property type="match status" value="1"/>
</dbReference>
<keyword id="KW-1003">Cell membrane</keyword>
<keyword id="KW-0472">Membrane</keyword>
<keyword id="KW-1185">Reference proteome</keyword>
<reference key="1">
    <citation type="journal article" date="2003" name="Proc. Natl. Acad. Sci. U.S.A.">
        <title>Reductive genome evolution in Buchnera aphidicola.</title>
        <authorList>
            <person name="van Ham R.C.H.J."/>
            <person name="Kamerbeek J."/>
            <person name="Palacios C."/>
            <person name="Rausell C."/>
            <person name="Abascal F."/>
            <person name="Bastolla U."/>
            <person name="Fernandez J.M."/>
            <person name="Jimenez L."/>
            <person name="Postigo M."/>
            <person name="Silva F.J."/>
            <person name="Tamames J."/>
            <person name="Viguera E."/>
            <person name="Latorre A."/>
            <person name="Valencia A."/>
            <person name="Moran F."/>
            <person name="Moya A."/>
        </authorList>
    </citation>
    <scope>NUCLEOTIDE SEQUENCE [LARGE SCALE GENOMIC DNA]</scope>
    <source>
        <strain>Bp</strain>
    </source>
</reference>
<name>YIDD_BUCBP</name>
<feature type="chain" id="PRO_0000171804" description="Putative membrane protein insertion efficiency factor">
    <location>
        <begin position="1"/>
        <end position="85"/>
    </location>
</feature>
<organism>
    <name type="scientific">Buchnera aphidicola subsp. Baizongia pistaciae (strain Bp)</name>
    <dbReference type="NCBI Taxonomy" id="224915"/>
    <lineage>
        <taxon>Bacteria</taxon>
        <taxon>Pseudomonadati</taxon>
        <taxon>Pseudomonadota</taxon>
        <taxon>Gammaproteobacteria</taxon>
        <taxon>Enterobacterales</taxon>
        <taxon>Erwiniaceae</taxon>
        <taxon>Buchnera</taxon>
    </lineage>
</organism>
<accession>P59471</accession>
<comment type="function">
    <text evidence="1">Could be involved in insertion of integral membrane proteins into the membrane.</text>
</comment>
<comment type="subcellular location">
    <subcellularLocation>
        <location evidence="1">Cell membrane</location>
        <topology evidence="1">Peripheral membrane protein</topology>
        <orientation evidence="1">Cytoplasmic side</orientation>
    </subcellularLocation>
</comment>
<comment type="similarity">
    <text evidence="1">Belongs to the UPF0161 family.</text>
</comment>
<protein>
    <recommendedName>
        <fullName evidence="1">Putative membrane protein insertion efficiency factor</fullName>
    </recommendedName>
</protein>